<organism>
    <name type="scientific">Listeria grayi</name>
    <name type="common">Listeria murrayi</name>
    <dbReference type="NCBI Taxonomy" id="1641"/>
    <lineage>
        <taxon>Bacteria</taxon>
        <taxon>Bacillati</taxon>
        <taxon>Bacillota</taxon>
        <taxon>Bacilli</taxon>
        <taxon>Bacillales</taxon>
        <taxon>Listeriaceae</taxon>
        <taxon>Listeria</taxon>
    </lineage>
</organism>
<evidence type="ECO:0000255" key="1">
    <source>
        <dbReference type="HAMAP-Rule" id="MF_00338"/>
    </source>
</evidence>
<sequence>MITTTSPTIEGKQIIEYKKIVFGEVITGINVLKDIGAGIRNFFGGRSGGYEEELIQAREAAIEEMENRAEALGANAIIAVDVDYEVLGADNGMLMVSVSGTAVVVE</sequence>
<protein>
    <recommendedName>
        <fullName evidence="1">UPF0145 protein</fullName>
    </recommendedName>
</protein>
<dbReference type="EMBL" id="AJ249739">
    <property type="protein sequence ID" value="CAC80679.1"/>
    <property type="molecule type" value="Genomic_DNA"/>
</dbReference>
<dbReference type="RefSeq" id="WP_003756415.1">
    <property type="nucleotide sequence ID" value="NZ_UGPG01000001.1"/>
</dbReference>
<dbReference type="SMR" id="Q8VN02"/>
<dbReference type="OrthoDB" id="9796448at2"/>
<dbReference type="Gene3D" id="3.30.110.70">
    <property type="entry name" value="Hypothetical protein apc22750. Chain B"/>
    <property type="match status" value="1"/>
</dbReference>
<dbReference type="HAMAP" id="MF_00338">
    <property type="entry name" value="UPF0145"/>
    <property type="match status" value="1"/>
</dbReference>
<dbReference type="InterPro" id="IPR035439">
    <property type="entry name" value="UPF0145_dom_sf"/>
</dbReference>
<dbReference type="InterPro" id="IPR002765">
    <property type="entry name" value="UPF0145_YbjQ-like"/>
</dbReference>
<dbReference type="NCBIfam" id="NF002224">
    <property type="entry name" value="PRK01119.1"/>
    <property type="match status" value="1"/>
</dbReference>
<dbReference type="PANTHER" id="PTHR34068">
    <property type="entry name" value="UPF0145 PROTEIN YBJQ"/>
    <property type="match status" value="1"/>
</dbReference>
<dbReference type="PANTHER" id="PTHR34068:SF1">
    <property type="entry name" value="UPF0145 PROTEIN YBJQ"/>
    <property type="match status" value="1"/>
</dbReference>
<dbReference type="Pfam" id="PF01906">
    <property type="entry name" value="YbjQ_1"/>
    <property type="match status" value="1"/>
</dbReference>
<dbReference type="SUPFAM" id="SSF117782">
    <property type="entry name" value="YbjQ-like"/>
    <property type="match status" value="1"/>
</dbReference>
<feature type="chain" id="PRO_0000138472" description="UPF0145 protein">
    <location>
        <begin position="1"/>
        <end position="106"/>
    </location>
</feature>
<accession>Q8VN02</accession>
<name>Y208_LISGR</name>
<proteinExistence type="inferred from homology"/>
<reference key="1">
    <citation type="submission" date="1999-09" db="EMBL/GenBank/DDBJ databases">
        <title>The evolution of virulence determinants in the Listeria genus.</title>
        <authorList>
            <person name="Ng E.Y."/>
            <person name="Goebel W."/>
        </authorList>
    </citation>
    <scope>NUCLEOTIDE SEQUENCE [GENOMIC DNA]</scope>
</reference>
<comment type="similarity">
    <text evidence="1">Belongs to the UPF0145 family.</text>
</comment>